<comment type="function">
    <text evidence="1">Attaches a formyl group to the free amino group of methionyl-tRNA(fMet). The formyl group appears to play a dual role in the initiator identity of N-formylmethionyl-tRNA by promoting its recognition by IF2 and preventing the misappropriation of this tRNA by the elongation apparatus.</text>
</comment>
<comment type="catalytic activity">
    <reaction evidence="1">
        <text>L-methionyl-tRNA(fMet) + (6R)-10-formyltetrahydrofolate = N-formyl-L-methionyl-tRNA(fMet) + (6S)-5,6,7,8-tetrahydrofolate + H(+)</text>
        <dbReference type="Rhea" id="RHEA:24380"/>
        <dbReference type="Rhea" id="RHEA-COMP:9952"/>
        <dbReference type="Rhea" id="RHEA-COMP:9953"/>
        <dbReference type="ChEBI" id="CHEBI:15378"/>
        <dbReference type="ChEBI" id="CHEBI:57453"/>
        <dbReference type="ChEBI" id="CHEBI:78530"/>
        <dbReference type="ChEBI" id="CHEBI:78844"/>
        <dbReference type="ChEBI" id="CHEBI:195366"/>
        <dbReference type="EC" id="2.1.2.9"/>
    </reaction>
</comment>
<comment type="similarity">
    <text evidence="1">Belongs to the Fmt family.</text>
</comment>
<name>FMT_MYCMS</name>
<reference key="1">
    <citation type="journal article" date="2004" name="Genome Res.">
        <title>The genome sequence of Mycoplasma mycoides subsp. mycoides SC type strain PG1T, the causative agent of contagious bovine pleuropneumonia (CBPP).</title>
        <authorList>
            <person name="Westberg J."/>
            <person name="Persson A."/>
            <person name="Holmberg A."/>
            <person name="Goesmann A."/>
            <person name="Lundeberg J."/>
            <person name="Johansson K.-E."/>
            <person name="Pettersson B."/>
            <person name="Uhlen M."/>
        </authorList>
    </citation>
    <scope>NUCLEOTIDE SEQUENCE [LARGE SCALE GENOMIC DNA]</scope>
    <source>
        <strain>CCUG 32753 / NCTC 10114 / PG1</strain>
    </source>
</reference>
<evidence type="ECO:0000255" key="1">
    <source>
        <dbReference type="HAMAP-Rule" id="MF_00182"/>
    </source>
</evidence>
<accession>Q6MTF8</accession>
<feature type="chain" id="PRO_0000082994" description="Methionyl-tRNA formyltransferase">
    <location>
        <begin position="1"/>
        <end position="317"/>
    </location>
</feature>
<feature type="binding site" evidence="1">
    <location>
        <begin position="112"/>
        <end position="115"/>
    </location>
    <ligand>
        <name>(6S)-5,6,7,8-tetrahydrofolate</name>
        <dbReference type="ChEBI" id="CHEBI:57453"/>
    </ligand>
</feature>
<organism>
    <name type="scientific">Mycoplasma mycoides subsp. mycoides SC (strain CCUG 32753 / NCTC 10114 / PG1)</name>
    <dbReference type="NCBI Taxonomy" id="272632"/>
    <lineage>
        <taxon>Bacteria</taxon>
        <taxon>Bacillati</taxon>
        <taxon>Mycoplasmatota</taxon>
        <taxon>Mollicutes</taxon>
        <taxon>Mycoplasmataceae</taxon>
        <taxon>Mycoplasma</taxon>
    </lineage>
</organism>
<keyword id="KW-0648">Protein biosynthesis</keyword>
<keyword id="KW-1185">Reference proteome</keyword>
<keyword id="KW-0808">Transferase</keyword>
<proteinExistence type="inferred from homology"/>
<gene>
    <name evidence="1" type="primary">fmt</name>
    <name type="ordered locus">MSC_0450</name>
</gene>
<dbReference type="EC" id="2.1.2.9" evidence="1"/>
<dbReference type="EMBL" id="BX293980">
    <property type="protein sequence ID" value="CAE77078.1"/>
    <property type="molecule type" value="Genomic_DNA"/>
</dbReference>
<dbReference type="RefSeq" id="NP_975436.1">
    <property type="nucleotide sequence ID" value="NC_005364.2"/>
</dbReference>
<dbReference type="RefSeq" id="WP_011166634.1">
    <property type="nucleotide sequence ID" value="NC_005364.2"/>
</dbReference>
<dbReference type="SMR" id="Q6MTF8"/>
<dbReference type="STRING" id="272632.MSC_0450"/>
<dbReference type="KEGG" id="mmy:MSC_0450"/>
<dbReference type="PATRIC" id="fig|272632.4.peg.490"/>
<dbReference type="eggNOG" id="COG0223">
    <property type="taxonomic scope" value="Bacteria"/>
</dbReference>
<dbReference type="HOGENOM" id="CLU_033347_1_1_14"/>
<dbReference type="Proteomes" id="UP000001016">
    <property type="component" value="Chromosome"/>
</dbReference>
<dbReference type="GO" id="GO:0005829">
    <property type="term" value="C:cytosol"/>
    <property type="evidence" value="ECO:0007669"/>
    <property type="project" value="TreeGrafter"/>
</dbReference>
<dbReference type="GO" id="GO:0004479">
    <property type="term" value="F:methionyl-tRNA formyltransferase activity"/>
    <property type="evidence" value="ECO:0007669"/>
    <property type="project" value="UniProtKB-UniRule"/>
</dbReference>
<dbReference type="CDD" id="cd08646">
    <property type="entry name" value="FMT_core_Met-tRNA-FMT_N"/>
    <property type="match status" value="1"/>
</dbReference>
<dbReference type="CDD" id="cd08704">
    <property type="entry name" value="Met_tRNA_FMT_C"/>
    <property type="match status" value="1"/>
</dbReference>
<dbReference type="Gene3D" id="3.40.50.12230">
    <property type="match status" value="1"/>
</dbReference>
<dbReference type="HAMAP" id="MF_00182">
    <property type="entry name" value="Formyl_trans"/>
    <property type="match status" value="1"/>
</dbReference>
<dbReference type="InterPro" id="IPR005794">
    <property type="entry name" value="Fmt"/>
</dbReference>
<dbReference type="InterPro" id="IPR005793">
    <property type="entry name" value="Formyl_trans_C"/>
</dbReference>
<dbReference type="InterPro" id="IPR002376">
    <property type="entry name" value="Formyl_transf_N"/>
</dbReference>
<dbReference type="InterPro" id="IPR036477">
    <property type="entry name" value="Formyl_transf_N_sf"/>
</dbReference>
<dbReference type="InterPro" id="IPR011034">
    <property type="entry name" value="Formyl_transferase-like_C_sf"/>
</dbReference>
<dbReference type="InterPro" id="IPR001555">
    <property type="entry name" value="GART_AS"/>
</dbReference>
<dbReference type="InterPro" id="IPR044135">
    <property type="entry name" value="Met-tRNA-FMT_C"/>
</dbReference>
<dbReference type="InterPro" id="IPR041711">
    <property type="entry name" value="Met-tRNA-FMT_N"/>
</dbReference>
<dbReference type="NCBIfam" id="TIGR00460">
    <property type="entry name" value="fmt"/>
    <property type="match status" value="1"/>
</dbReference>
<dbReference type="PANTHER" id="PTHR11138">
    <property type="entry name" value="METHIONYL-TRNA FORMYLTRANSFERASE"/>
    <property type="match status" value="1"/>
</dbReference>
<dbReference type="PANTHER" id="PTHR11138:SF5">
    <property type="entry name" value="METHIONYL-TRNA FORMYLTRANSFERASE, MITOCHONDRIAL"/>
    <property type="match status" value="1"/>
</dbReference>
<dbReference type="Pfam" id="PF02911">
    <property type="entry name" value="Formyl_trans_C"/>
    <property type="match status" value="1"/>
</dbReference>
<dbReference type="Pfam" id="PF00551">
    <property type="entry name" value="Formyl_trans_N"/>
    <property type="match status" value="1"/>
</dbReference>
<dbReference type="SUPFAM" id="SSF50486">
    <property type="entry name" value="FMT C-terminal domain-like"/>
    <property type="match status" value="1"/>
</dbReference>
<dbReference type="SUPFAM" id="SSF53328">
    <property type="entry name" value="Formyltransferase"/>
    <property type="match status" value="1"/>
</dbReference>
<dbReference type="PROSITE" id="PS00373">
    <property type="entry name" value="GART"/>
    <property type="match status" value="1"/>
</dbReference>
<protein>
    <recommendedName>
        <fullName evidence="1">Methionyl-tRNA formyltransferase</fullName>
        <ecNumber evidence="1">2.1.2.9</ecNumber>
    </recommendedName>
</protein>
<sequence length="317" mass="35832">MQNKIKVVFCGTPKIGADVLKALIEMNQVEIVLVISQPDKPIGRKKQIVHTPVKKLALENNLKVVQPNKIGEIYDDLAKLEFDFLITCAFGQFIPTKILKLAKIDSINFHGSLLPKLRGGAPIQYAIKNGDKKTGITIMQMVKQMDAGDYYVQESIDILDSDDSGSLFEKMGHLAYSMCKKYLVDIYNHKFELIKQNEDEVTFCKNISSEEEKINWNNTSLDIFNLIRSLSPSPISYTTINNQRYKIKSSKVIDLDNQNKNAIPGTILGINKQGIVVKTLDKALLILEIQKEGKKMILASNYYLNKLSDLKINDKFD</sequence>